<organismHost>
    <name type="scientific">Homo sapiens</name>
    <name type="common">Human</name>
    <dbReference type="NCBI Taxonomy" id="9606"/>
</organismHost>
<sequence length="299" mass="32967">MSKHKNQRTARTLEKTWDTLNHLIVISSCLYRLNLKSIAQIALSVLAMIISTSLIIAAIIFIISANHKVTLTTVTVQTIKNHTEKNITTYLTQVPPERVSSSKQPTTTSPIHTNSATTSPNTKSETHHTTAQTKGRTTTSTQTNKPSTKPRLKNPPKKPKDDYHFEVFNFVPCSICGNNQLCKSICKTIPSNKPKKKPTIKPTNKPTTKTTNKRDPKTPAKTTKKETTTNPTKKPTLTTTERDTSTSQSTVLDTTTLEHTIQQQSLHSTTPENTPNSTQTPTASEPSTSNSTQNTQSHA</sequence>
<protein>
    <recommendedName>
        <fullName>Major surface glycoprotein G</fullName>
    </recommendedName>
    <alternativeName>
        <fullName>Attachment glycoprotein G</fullName>
    </alternativeName>
    <alternativeName>
        <fullName>Membrane-bound glycoprotein</fullName>
        <shortName>mG</shortName>
    </alternativeName>
    <component>
        <recommendedName>
            <fullName evidence="2">Mature secreted glycoprotein G</fullName>
            <shortName evidence="2">Mature sG</shortName>
        </recommendedName>
    </component>
</protein>
<comment type="function">
    <molecule>Isoform Membrane-bound glycoprotein G</molecule>
    <text evidence="1">Attaches the virion to the host cell membrane by interacting with heparan sulfate, initiating the infection. Interacts with host CX3CR1, the receptor for the CX3C chemokine fractalkine, to modulate the immune response and facilitate infection. Unlike the other paramyxovirus attachment proteins, lacks both neuraminidase and hemagglutinating activities.</text>
</comment>
<comment type="function">
    <molecule>Isoform Secreted glycoprotein G</molecule>
    <text evidence="1">Helps the virus escape antibody-dependent restriction of replication by acting as an antigen decoy and by modulating the activity of leukocytes bearing Fc-gamma receptors.</text>
</comment>
<comment type="subunit">
    <molecule>Isoform Membrane-bound glycoprotein G</molecule>
    <text evidence="1">Homooligomer. Interacts (via N-terminus) with protein M. Part of a complex composed of F1, F2 and G glycoproteins. Interacts with protein SH. Interacts with host heparate sulfate; this interaction probably participates in the viral attachment to the host cell. Interacts with host CX3CR1; this interaction plays an important role in viral entry. Interacts with the host lectins CD209/DC-SIGN and CD209L/L-SIGN on dendritic cells; these interactions stimulate the phosphorylation of MAPK3/ERK1 and MAPK1/ERK2, which inhibits dendritic cell activation and could participate in the limited immunity against RSV reinfection.</text>
</comment>
<comment type="subcellular location">
    <molecule>Isoform Membrane-bound glycoprotein G</molecule>
    <subcellularLocation>
        <location evidence="1">Virion membrane</location>
        <topology evidence="1">Single-pass type II membrane protein</topology>
    </subcellularLocation>
    <subcellularLocation>
        <location evidence="1">Host cell membrane</location>
        <topology evidence="1">Single-pass type II membrane protein</topology>
    </subcellularLocation>
</comment>
<comment type="subcellular location">
    <molecule>Isoform Secreted glycoprotein G</molecule>
    <subcellularLocation>
        <location evidence="2">Secreted</location>
    </subcellularLocation>
    <text evidence="2">The protein is shed from infected cells before the appearance of progeny virus. The initiation at the downstream methionine removes a portion of the transmembrane domain. The remaining hydrophobic portion of the sG protein is essential for translocating it into the lumen of the ER during translation and would likely maintain its membrane association until a proteolytic event releases the mature sG protein into the medium.</text>
</comment>
<comment type="alternative products">
    <event type="alternative initiation"/>
    <isoform>
        <id>O36633-1</id>
        <name>Membrane-bound glycoprotein G</name>
        <sequence type="displayed"/>
    </isoform>
    <isoform>
        <id>O36633-2</id>
        <name>Secreted glycoprotein G</name>
        <sequence type="described" ref="VSP_036523"/>
    </isoform>
</comment>
<comment type="domain">
    <molecule>Isoform Membrane-bound glycoprotein G</molecule>
    <text evidence="1">Contains a linear heparin binding domain essential for virus attachment to the host.</text>
</comment>
<comment type="PTM">
    <molecule>Isoform Secreted glycoprotein G</molecule>
    <text evidence="2">Cleaved to give rise to the mature sG protein which lacks the transmembrane domain.</text>
</comment>
<comment type="PTM">
    <molecule>Isoform Membrane-bound glycoprotein G</molecule>
    <text evidence="1">N- and O-glycosylated. May carry 30-40 separate O-linked carbohydrate chains distributed among the 91 serine and threonine residues.</text>
</comment>
<comment type="PTM">
    <molecule>Isoform Membrane-bound glycoprotein G</molecule>
    <text evidence="1">Palmitoylated.</text>
</comment>
<comment type="similarity">
    <text evidence="5">Belongs to the pneumoviruses glycoprotein G family.</text>
</comment>
<evidence type="ECO:0000250" key="1">
    <source>
        <dbReference type="UniProtKB" id="P03423"/>
    </source>
</evidence>
<evidence type="ECO:0000250" key="2">
    <source>
        <dbReference type="UniProtKB" id="P20895"/>
    </source>
</evidence>
<evidence type="ECO:0000255" key="3"/>
<evidence type="ECO:0000256" key="4">
    <source>
        <dbReference type="SAM" id="MobiDB-lite"/>
    </source>
</evidence>
<evidence type="ECO:0000305" key="5"/>
<name>GLYC_HRSVB</name>
<reference key="1">
    <citation type="journal article" date="1997" name="Proc. Natl. Acad. Sci. U.S.A.">
        <title>Respiratory syncytial virus (RSV) SH and G proteins are not essential for viral replication in vitro: clinical evaluation and molecular characterization of a cold-passaged, attenuated RSV subgroup B mutant.</title>
        <authorList>
            <person name="Karron R.A."/>
            <person name="Buonagurio D.A."/>
            <person name="Georgiu A.F."/>
            <person name="Whitehead S.S."/>
            <person name="Adamus J.E."/>
            <person name="Clements-Mann M.L."/>
            <person name="Harris D.O."/>
            <person name="Randolph V.B."/>
            <person name="Udem S.A."/>
            <person name="Murphy B.R."/>
            <person name="Sidhu M.S."/>
        </authorList>
    </citation>
    <scope>NUCLEOTIDE SEQUENCE [GENOMIC RNA]</scope>
    <source>
        <strain>B1</strain>
    </source>
</reference>
<dbReference type="EMBL" id="AF013254">
    <property type="protein sequence ID" value="AAB82435.1"/>
    <property type="molecule type" value="Genomic_RNA"/>
</dbReference>
<dbReference type="RefSeq" id="NP_056862.1">
    <property type="nucleotide sequence ID" value="NC_001781.1"/>
</dbReference>
<dbReference type="SMR" id="O36633"/>
<dbReference type="GlyCosmos" id="O36633">
    <property type="glycosylation" value="20 sites, No reported glycans"/>
</dbReference>
<dbReference type="GeneID" id="1489824"/>
<dbReference type="KEGG" id="vg:1489824"/>
<dbReference type="Proteomes" id="UP000002472">
    <property type="component" value="Segment"/>
</dbReference>
<dbReference type="GO" id="GO:0005576">
    <property type="term" value="C:extracellular region"/>
    <property type="evidence" value="ECO:0007669"/>
    <property type="project" value="UniProtKB-SubCell"/>
</dbReference>
<dbReference type="GO" id="GO:0020002">
    <property type="term" value="C:host cell plasma membrane"/>
    <property type="evidence" value="ECO:0007669"/>
    <property type="project" value="UniProtKB-SubCell"/>
</dbReference>
<dbReference type="GO" id="GO:0016020">
    <property type="term" value="C:membrane"/>
    <property type="evidence" value="ECO:0007669"/>
    <property type="project" value="UniProtKB-KW"/>
</dbReference>
<dbReference type="GO" id="GO:0055036">
    <property type="term" value="C:virion membrane"/>
    <property type="evidence" value="ECO:0007669"/>
    <property type="project" value="UniProtKB-SubCell"/>
</dbReference>
<dbReference type="GO" id="GO:0046718">
    <property type="term" value="P:symbiont entry into host cell"/>
    <property type="evidence" value="ECO:0007669"/>
    <property type="project" value="UniProtKB-KW"/>
</dbReference>
<dbReference type="GO" id="GO:0019062">
    <property type="term" value="P:virion attachment to host cell"/>
    <property type="evidence" value="ECO:0007669"/>
    <property type="project" value="UniProtKB-KW"/>
</dbReference>
<dbReference type="InterPro" id="IPR000925">
    <property type="entry name" value="G_prot"/>
</dbReference>
<dbReference type="Pfam" id="PF00802">
    <property type="entry name" value="Glycoprotein_G"/>
    <property type="match status" value="1"/>
</dbReference>
<keyword id="KW-0024">Alternative initiation</keyword>
<keyword id="KW-1015">Disulfide bond</keyword>
<keyword id="KW-0325">Glycoprotein</keyword>
<keyword id="KW-1032">Host cell membrane</keyword>
<keyword id="KW-1043">Host membrane</keyword>
<keyword id="KW-0945">Host-virus interaction</keyword>
<keyword id="KW-0472">Membrane</keyword>
<keyword id="KW-1185">Reference proteome</keyword>
<keyword id="KW-0964">Secreted</keyword>
<keyword id="KW-0812">Transmembrane</keyword>
<keyword id="KW-1133">Transmembrane helix</keyword>
<keyword id="KW-1161">Viral attachment to host cell</keyword>
<keyword id="KW-0899">Viral immunoevasion</keyword>
<keyword id="KW-0946">Virion</keyword>
<keyword id="KW-1160">Virus entry into host cell</keyword>
<accession>O36633</accession>
<organism>
    <name type="scientific">Human respiratory syncytial virus B (strain B1)</name>
    <dbReference type="NCBI Taxonomy" id="79692"/>
    <lineage>
        <taxon>Viruses</taxon>
        <taxon>Riboviria</taxon>
        <taxon>Orthornavirae</taxon>
        <taxon>Negarnaviricota</taxon>
        <taxon>Haploviricotina</taxon>
        <taxon>Monjiviricetes</taxon>
        <taxon>Mononegavirales</taxon>
        <taxon>Pneumoviridae</taxon>
        <taxon>Orthopneumovirus</taxon>
        <taxon>Orthopneumovirus hominis</taxon>
    </lineage>
</organism>
<feature type="chain" id="PRO_0000365795" description="Major surface glycoprotein G">
    <location>
        <begin position="1"/>
        <end position="299"/>
    </location>
</feature>
<feature type="chain" id="PRO_0000451324" description="Mature secreted glycoprotein G" evidence="1">
    <location>
        <begin position="66"/>
        <end position="299"/>
    </location>
</feature>
<feature type="topological domain" description="Cytoplasmic" evidence="3">
    <location>
        <begin position="1"/>
        <end position="37"/>
    </location>
</feature>
<feature type="transmembrane region" description="Helical">
    <location>
        <begin position="38"/>
        <end position="66"/>
    </location>
</feature>
<feature type="topological domain" description="Extracellular" evidence="3">
    <location>
        <begin position="67"/>
        <end position="299"/>
    </location>
</feature>
<feature type="region of interest" description="Disordered" evidence="4">
    <location>
        <begin position="89"/>
        <end position="160"/>
    </location>
</feature>
<feature type="region of interest" description="Binding to host heparan sulfate" evidence="1">
    <location>
        <begin position="187"/>
        <end position="198"/>
    </location>
</feature>
<feature type="region of interest" description="Disordered" evidence="4">
    <location>
        <begin position="189"/>
        <end position="299"/>
    </location>
</feature>
<feature type="short sequence motif" description="Microbody targeting signal" evidence="3">
    <location>
        <begin position="297"/>
        <end position="299"/>
    </location>
</feature>
<feature type="compositionally biased region" description="Polar residues" evidence="4">
    <location>
        <begin position="99"/>
        <end position="123"/>
    </location>
</feature>
<feature type="compositionally biased region" description="Low complexity" evidence="4">
    <location>
        <begin position="129"/>
        <end position="147"/>
    </location>
</feature>
<feature type="compositionally biased region" description="Basic residues" evidence="4">
    <location>
        <begin position="148"/>
        <end position="157"/>
    </location>
</feature>
<feature type="compositionally biased region" description="Low complexity" evidence="4">
    <location>
        <begin position="200"/>
        <end position="210"/>
    </location>
</feature>
<feature type="compositionally biased region" description="Basic and acidic residues" evidence="4">
    <location>
        <begin position="212"/>
        <end position="227"/>
    </location>
</feature>
<feature type="compositionally biased region" description="Low complexity" evidence="4">
    <location>
        <begin position="228"/>
        <end position="250"/>
    </location>
</feature>
<feature type="compositionally biased region" description="Polar residues" evidence="4">
    <location>
        <begin position="251"/>
        <end position="286"/>
    </location>
</feature>
<feature type="compositionally biased region" description="Low complexity" evidence="4">
    <location>
        <begin position="287"/>
        <end position="299"/>
    </location>
</feature>
<feature type="site" description="Cleavage" evidence="1">
    <location>
        <begin position="65"/>
        <end position="66"/>
    </location>
</feature>
<feature type="glycosylation site" description="O-linked (GalNAc...) threonine; by host" evidence="1">
    <location>
        <position position="70"/>
    </location>
</feature>
<feature type="glycosylation site" description="O-linked (GalNAc...) threonine; by host" evidence="1">
    <location>
        <position position="72"/>
    </location>
</feature>
<feature type="glycosylation site" description="N-linked (GlcNAc...) asparagine; by host" evidence="3">
    <location>
        <position position="81"/>
    </location>
</feature>
<feature type="glycosylation site" description="N-linked (GlcNAc...) asparagine; by host" evidence="3">
    <location>
        <position position="86"/>
    </location>
</feature>
<feature type="glycosylation site" description="O-linked (GalNAc...) threonine; by host" evidence="1">
    <location>
        <position position="92"/>
    </location>
</feature>
<feature type="glycosylation site" description="O-linked (GalNAc...) serine; by host" evidence="3">
    <location>
        <position position="100"/>
    </location>
</feature>
<feature type="glycosylation site" description="O-linked (GalNAc...) threonine; by host" evidence="3">
    <location>
        <position position="113"/>
    </location>
</feature>
<feature type="glycosylation site" description="O-linked (GalNAc...) threonine; by host" evidence="3">
    <location>
        <position position="137"/>
    </location>
</feature>
<feature type="glycosylation site" description="O-linked (GalNAc...) threonine; by host" evidence="3">
    <location>
        <position position="138"/>
    </location>
</feature>
<feature type="glycosylation site" description="O-linked (GalNAc...) threonine; by host" evidence="3">
    <location>
        <position position="139"/>
    </location>
</feature>
<feature type="glycosylation site" description="O-linked (GalNAc...) threonine; by host" evidence="3">
    <location>
        <position position="141"/>
    </location>
</feature>
<feature type="glycosylation site" description="O-linked (GalNAc...) threonine; by host" evidence="3">
    <location>
        <position position="199"/>
    </location>
</feature>
<feature type="glycosylation site" description="O-linked (GalNAc...) threonine; by host" evidence="3">
    <location>
        <position position="203"/>
    </location>
</feature>
<feature type="glycosylation site" description="O-linked (GalNAc...) threonine; by host" evidence="3">
    <location>
        <position position="232"/>
    </location>
</feature>
<feature type="glycosylation site" description="O-linked (GalNAc...) threonine; by host" evidence="3">
    <location>
        <position position="236"/>
    </location>
</feature>
<feature type="glycosylation site" description="O-linked (GalNAc...) threonine; by host" evidence="3">
    <location>
        <position position="254"/>
    </location>
</feature>
<feature type="glycosylation site" description="N-linked (GlcNAc...) asparagine; by host" evidence="3">
    <location>
        <position position="276"/>
    </location>
</feature>
<feature type="glycosylation site" description="O-linked (GalNAc...) serine; by host" evidence="3">
    <location>
        <position position="284"/>
    </location>
</feature>
<feature type="glycosylation site" description="N-linked (GlcNAc...) asparagine; by host" evidence="3">
    <location>
        <position position="290"/>
    </location>
</feature>
<feature type="glycosylation site" description="O-linked (GalNAc...) serine; by host" evidence="3">
    <location>
        <position position="291"/>
    </location>
</feature>
<feature type="disulfide bond" evidence="1">
    <location>
        <begin position="173"/>
        <end position="186"/>
    </location>
</feature>
<feature type="disulfide bond" evidence="1">
    <location>
        <begin position="176"/>
        <end position="182"/>
    </location>
</feature>
<feature type="splice variant" id="VSP_036523" description="In isoform Secreted glycoprotein G." evidence="1">
    <location>
        <begin position="1"/>
        <end position="47"/>
    </location>
</feature>
<proteinExistence type="inferred from homology"/>
<gene>
    <name type="primary">G</name>
</gene>